<organism>
    <name type="scientific">Salmonella choleraesuis (strain SC-B67)</name>
    <dbReference type="NCBI Taxonomy" id="321314"/>
    <lineage>
        <taxon>Bacteria</taxon>
        <taxon>Pseudomonadati</taxon>
        <taxon>Pseudomonadota</taxon>
        <taxon>Gammaproteobacteria</taxon>
        <taxon>Enterobacterales</taxon>
        <taxon>Enterobacteriaceae</taxon>
        <taxon>Salmonella</taxon>
    </lineage>
</organism>
<comment type="function">
    <text evidence="1">Catalyzes the conversion of dihydroorotate to orotate with quinone as electron acceptor.</text>
</comment>
<comment type="catalytic activity">
    <reaction evidence="1">
        <text>(S)-dihydroorotate + a quinone = orotate + a quinol</text>
        <dbReference type="Rhea" id="RHEA:30187"/>
        <dbReference type="ChEBI" id="CHEBI:24646"/>
        <dbReference type="ChEBI" id="CHEBI:30839"/>
        <dbReference type="ChEBI" id="CHEBI:30864"/>
        <dbReference type="ChEBI" id="CHEBI:132124"/>
        <dbReference type="EC" id="1.3.5.2"/>
    </reaction>
</comment>
<comment type="cofactor">
    <cofactor evidence="1">
        <name>FMN</name>
        <dbReference type="ChEBI" id="CHEBI:58210"/>
    </cofactor>
    <text evidence="1">Binds 1 FMN per subunit.</text>
</comment>
<comment type="pathway">
    <text evidence="1">Pyrimidine metabolism; UMP biosynthesis via de novo pathway; orotate from (S)-dihydroorotate (quinone route): step 1/1.</text>
</comment>
<comment type="subunit">
    <text evidence="1">Monomer.</text>
</comment>
<comment type="subcellular location">
    <subcellularLocation>
        <location evidence="1">Cell membrane</location>
        <topology evidence="1">Peripheral membrane protein</topology>
    </subcellularLocation>
</comment>
<comment type="similarity">
    <text evidence="1">Belongs to the dihydroorotate dehydrogenase family. Type 2 subfamily.</text>
</comment>
<protein>
    <recommendedName>
        <fullName evidence="1">Dihydroorotate dehydrogenase (quinone)</fullName>
        <ecNumber evidence="1">1.3.5.2</ecNumber>
    </recommendedName>
    <alternativeName>
        <fullName evidence="1">DHOdehase</fullName>
        <shortName evidence="1">DHOD</shortName>
        <shortName evidence="1">DHODase</shortName>
    </alternativeName>
    <alternativeName>
        <fullName evidence="1">Dihydroorotate oxidase</fullName>
    </alternativeName>
</protein>
<reference key="1">
    <citation type="journal article" date="2005" name="Nucleic Acids Res.">
        <title>The genome sequence of Salmonella enterica serovar Choleraesuis, a highly invasive and resistant zoonotic pathogen.</title>
        <authorList>
            <person name="Chiu C.-H."/>
            <person name="Tang P."/>
            <person name="Chu C."/>
            <person name="Hu S."/>
            <person name="Bao Q."/>
            <person name="Yu J."/>
            <person name="Chou Y.-Y."/>
            <person name="Wang H.-S."/>
            <person name="Lee Y.-S."/>
        </authorList>
    </citation>
    <scope>NUCLEOTIDE SEQUENCE [LARGE SCALE GENOMIC DNA]</scope>
    <source>
        <strain>SC-B67</strain>
    </source>
</reference>
<feature type="chain" id="PRO_0000148471" description="Dihydroorotate dehydrogenase (quinone)">
    <location>
        <begin position="1"/>
        <end position="336"/>
    </location>
</feature>
<feature type="active site" description="Nucleophile" evidence="1">
    <location>
        <position position="175"/>
    </location>
</feature>
<feature type="binding site" evidence="1">
    <location>
        <begin position="62"/>
        <end position="66"/>
    </location>
    <ligand>
        <name>FMN</name>
        <dbReference type="ChEBI" id="CHEBI:58210"/>
    </ligand>
</feature>
<feature type="binding site" evidence="1">
    <location>
        <position position="66"/>
    </location>
    <ligand>
        <name>substrate</name>
    </ligand>
</feature>
<feature type="binding site" evidence="1">
    <location>
        <position position="86"/>
    </location>
    <ligand>
        <name>FMN</name>
        <dbReference type="ChEBI" id="CHEBI:58210"/>
    </ligand>
</feature>
<feature type="binding site" evidence="1">
    <location>
        <begin position="111"/>
        <end position="115"/>
    </location>
    <ligand>
        <name>substrate</name>
    </ligand>
</feature>
<feature type="binding site" evidence="1">
    <location>
        <position position="139"/>
    </location>
    <ligand>
        <name>FMN</name>
        <dbReference type="ChEBI" id="CHEBI:58210"/>
    </ligand>
</feature>
<feature type="binding site" evidence="1">
    <location>
        <position position="172"/>
    </location>
    <ligand>
        <name>FMN</name>
        <dbReference type="ChEBI" id="CHEBI:58210"/>
    </ligand>
</feature>
<feature type="binding site" evidence="1">
    <location>
        <position position="172"/>
    </location>
    <ligand>
        <name>substrate</name>
    </ligand>
</feature>
<feature type="binding site" evidence="1">
    <location>
        <position position="177"/>
    </location>
    <ligand>
        <name>substrate</name>
    </ligand>
</feature>
<feature type="binding site" evidence="1">
    <location>
        <position position="217"/>
    </location>
    <ligand>
        <name>FMN</name>
        <dbReference type="ChEBI" id="CHEBI:58210"/>
    </ligand>
</feature>
<feature type="binding site" evidence="1">
    <location>
        <position position="245"/>
    </location>
    <ligand>
        <name>FMN</name>
        <dbReference type="ChEBI" id="CHEBI:58210"/>
    </ligand>
</feature>
<feature type="binding site" evidence="1">
    <location>
        <begin position="246"/>
        <end position="247"/>
    </location>
    <ligand>
        <name>substrate</name>
    </ligand>
</feature>
<feature type="binding site" evidence="1">
    <location>
        <position position="268"/>
    </location>
    <ligand>
        <name>FMN</name>
        <dbReference type="ChEBI" id="CHEBI:58210"/>
    </ligand>
</feature>
<feature type="binding site" evidence="1">
    <location>
        <position position="297"/>
    </location>
    <ligand>
        <name>FMN</name>
        <dbReference type="ChEBI" id="CHEBI:58210"/>
    </ligand>
</feature>
<feature type="binding site" evidence="1">
    <location>
        <begin position="318"/>
        <end position="319"/>
    </location>
    <ligand>
        <name>FMN</name>
        <dbReference type="ChEBI" id="CHEBI:58210"/>
    </ligand>
</feature>
<sequence length="336" mass="36814">MYYPFVRKALFQLDPERAHEFTFQQLRRITGTPLEALVRQKVPTKPVTCMGLTFKNPLGLAAGLDKDGECIDALDAMGFGSLEIGTVTPRPQPGNDKPRLFRLVDAEGLINRMGFNNLGVDNLVENVKKAHFDGILGINIGKNKDTPVENGKDDYLICMEKVYAYAGYIAINISSPNTLGLRTLQYGDALDDLLTAIKNKQNDLQAIHHKYVPVAVKIAPDLCEEELIQVADSLLRHNIDGVIATNTTLDRSLVQGMKNCQQTGGLSGRPLQLKSTEIIRRLSQELKGQLPIIGVGGIDSVIAAREKIAAGATLVQIYSGFIFKGPPLIKEIVTHI</sequence>
<keyword id="KW-1003">Cell membrane</keyword>
<keyword id="KW-0285">Flavoprotein</keyword>
<keyword id="KW-0288">FMN</keyword>
<keyword id="KW-0472">Membrane</keyword>
<keyword id="KW-0560">Oxidoreductase</keyword>
<keyword id="KW-0665">Pyrimidine biosynthesis</keyword>
<accession>Q57QU4</accession>
<dbReference type="EC" id="1.3.5.2" evidence="1"/>
<dbReference type="EMBL" id="AE017220">
    <property type="protein sequence ID" value="AAX64917.1"/>
    <property type="molecule type" value="Genomic_DNA"/>
</dbReference>
<dbReference type="RefSeq" id="WP_001539645.1">
    <property type="nucleotide sequence ID" value="NC_006905.1"/>
</dbReference>
<dbReference type="SMR" id="Q57QU4"/>
<dbReference type="KEGG" id="sec:SCH_1011"/>
<dbReference type="HOGENOM" id="CLU_013640_2_0_6"/>
<dbReference type="UniPathway" id="UPA00070">
    <property type="reaction ID" value="UER00946"/>
</dbReference>
<dbReference type="Proteomes" id="UP000000538">
    <property type="component" value="Chromosome"/>
</dbReference>
<dbReference type="GO" id="GO:0005737">
    <property type="term" value="C:cytoplasm"/>
    <property type="evidence" value="ECO:0007669"/>
    <property type="project" value="InterPro"/>
</dbReference>
<dbReference type="GO" id="GO:0005886">
    <property type="term" value="C:plasma membrane"/>
    <property type="evidence" value="ECO:0007669"/>
    <property type="project" value="UniProtKB-SubCell"/>
</dbReference>
<dbReference type="GO" id="GO:0106430">
    <property type="term" value="F:dihydroorotate dehydrogenase (quinone) activity"/>
    <property type="evidence" value="ECO:0007669"/>
    <property type="project" value="UniProtKB-EC"/>
</dbReference>
<dbReference type="GO" id="GO:0006207">
    <property type="term" value="P:'de novo' pyrimidine nucleobase biosynthetic process"/>
    <property type="evidence" value="ECO:0007669"/>
    <property type="project" value="InterPro"/>
</dbReference>
<dbReference type="GO" id="GO:0044205">
    <property type="term" value="P:'de novo' UMP biosynthetic process"/>
    <property type="evidence" value="ECO:0007669"/>
    <property type="project" value="UniProtKB-UniRule"/>
</dbReference>
<dbReference type="CDD" id="cd04738">
    <property type="entry name" value="DHOD_2_like"/>
    <property type="match status" value="1"/>
</dbReference>
<dbReference type="FunFam" id="3.20.20.70:FF:000028">
    <property type="entry name" value="Dihydroorotate dehydrogenase (quinone)"/>
    <property type="match status" value="1"/>
</dbReference>
<dbReference type="Gene3D" id="3.20.20.70">
    <property type="entry name" value="Aldolase class I"/>
    <property type="match status" value="1"/>
</dbReference>
<dbReference type="HAMAP" id="MF_00225">
    <property type="entry name" value="DHO_dh_type2"/>
    <property type="match status" value="1"/>
</dbReference>
<dbReference type="InterPro" id="IPR013785">
    <property type="entry name" value="Aldolase_TIM"/>
</dbReference>
<dbReference type="InterPro" id="IPR050074">
    <property type="entry name" value="DHO_dehydrogenase"/>
</dbReference>
<dbReference type="InterPro" id="IPR012135">
    <property type="entry name" value="Dihydroorotate_DH_1_2"/>
</dbReference>
<dbReference type="InterPro" id="IPR005719">
    <property type="entry name" value="Dihydroorotate_DH_2"/>
</dbReference>
<dbReference type="InterPro" id="IPR005720">
    <property type="entry name" value="Dihydroorotate_DH_cat"/>
</dbReference>
<dbReference type="InterPro" id="IPR001295">
    <property type="entry name" value="Dihydroorotate_DH_CS"/>
</dbReference>
<dbReference type="NCBIfam" id="NF003644">
    <property type="entry name" value="PRK05286.1-1"/>
    <property type="match status" value="1"/>
</dbReference>
<dbReference type="NCBIfam" id="NF003645">
    <property type="entry name" value="PRK05286.1-2"/>
    <property type="match status" value="1"/>
</dbReference>
<dbReference type="NCBIfam" id="NF003646">
    <property type="entry name" value="PRK05286.1-4"/>
    <property type="match status" value="1"/>
</dbReference>
<dbReference type="NCBIfam" id="NF003652">
    <property type="entry name" value="PRK05286.2-5"/>
    <property type="match status" value="1"/>
</dbReference>
<dbReference type="NCBIfam" id="TIGR01036">
    <property type="entry name" value="pyrD_sub2"/>
    <property type="match status" value="1"/>
</dbReference>
<dbReference type="PANTHER" id="PTHR48109:SF4">
    <property type="entry name" value="DIHYDROOROTATE DEHYDROGENASE (QUINONE), MITOCHONDRIAL"/>
    <property type="match status" value="1"/>
</dbReference>
<dbReference type="PANTHER" id="PTHR48109">
    <property type="entry name" value="DIHYDROOROTATE DEHYDROGENASE (QUINONE), MITOCHONDRIAL-RELATED"/>
    <property type="match status" value="1"/>
</dbReference>
<dbReference type="Pfam" id="PF01180">
    <property type="entry name" value="DHO_dh"/>
    <property type="match status" value="1"/>
</dbReference>
<dbReference type="PIRSF" id="PIRSF000164">
    <property type="entry name" value="DHO_oxidase"/>
    <property type="match status" value="1"/>
</dbReference>
<dbReference type="SUPFAM" id="SSF51395">
    <property type="entry name" value="FMN-linked oxidoreductases"/>
    <property type="match status" value="1"/>
</dbReference>
<dbReference type="PROSITE" id="PS00911">
    <property type="entry name" value="DHODEHASE_1"/>
    <property type="match status" value="1"/>
</dbReference>
<dbReference type="PROSITE" id="PS00912">
    <property type="entry name" value="DHODEHASE_2"/>
    <property type="match status" value="1"/>
</dbReference>
<evidence type="ECO:0000255" key="1">
    <source>
        <dbReference type="HAMAP-Rule" id="MF_00225"/>
    </source>
</evidence>
<proteinExistence type="inferred from homology"/>
<name>PYRD_SALCH</name>
<gene>
    <name evidence="1" type="primary">pyrD</name>
    <name type="ordered locus">SCH_1011</name>
</gene>